<sequence length="664" mass="76530">MIDFFLKSEYLPAGDQPKAIKEIENSILLGNKYQTLKGVTGSGKTFTIANIIKNLNRPALVVSHNKTLAAQLYREFKDFFPNNAVEYFVSYYDYYQPESYVPSKDLFIEKEATINSEIEIKRIRTVTSLAKRRDVIVVATVSSIYALGSPDFFKKSAREFFVGQRISIKEISDIFVELYYERTLINLERDKFSIKGDIIEIWPSSEHGEFAYRICLDFDEIVKIYRISSFSKKNLGATNSFTLFAKSYFVIPYQNVLEAIPKISYDLDLQCQYFKDNGKLVEAERLKQRVEYDLEMLRETGFCSGIENYSKYLSGSTMGRPYCLFDFFPKDYLLFVDESHVTLPQFRGMYNGDYSRKLNLVNFGFRLPAALENRPLKYDEFDALINQVVFVSATPGFEENEKSSVTVDQIIRPTGLVDPEIITRHSDGQMEDLYIEIQKRVALKERVLITTLTKKMSEDLTEYLVTLGVKAKYLHSELDTLERVEVISLLRKSEIDVIVGINLLREGLDIPEVSLVAILDADKVGFLRSATSLIQTIGRAARNSNGLVIMYYDKISVAMREAIEETNRRRQIQIDYNKKNNITPKTIVKKIQNILEKELNNKNKNISYDFEKMVSGEKLSKKKLIDKLKFELEEAVNDERFEDAIVLRDKIKELGSKISVARNK</sequence>
<gene>
    <name evidence="1" type="primary">uvrB</name>
    <name type="ordered locus">BAPKO_0889</name>
    <name type="ordered locus">BafPKo_0863</name>
</gene>
<accession>Q0SM15</accession>
<accession>G0IQM7</accession>
<protein>
    <recommendedName>
        <fullName evidence="1">UvrABC system protein B</fullName>
        <shortName evidence="1">Protein UvrB</shortName>
    </recommendedName>
    <alternativeName>
        <fullName evidence="1">Excinuclease ABC subunit B</fullName>
    </alternativeName>
</protein>
<dbReference type="EMBL" id="CP000395">
    <property type="protein sequence ID" value="ABH02113.1"/>
    <property type="molecule type" value="Genomic_DNA"/>
</dbReference>
<dbReference type="EMBL" id="CP002933">
    <property type="protein sequence ID" value="AEL70052.1"/>
    <property type="molecule type" value="Genomic_DNA"/>
</dbReference>
<dbReference type="RefSeq" id="WP_011601262.1">
    <property type="nucleotide sequence ID" value="NC_008277.1"/>
</dbReference>
<dbReference type="SMR" id="Q0SM15"/>
<dbReference type="STRING" id="29518.BLA32_00045"/>
<dbReference type="KEGG" id="baf:BAPKO_0889"/>
<dbReference type="KEGG" id="bafz:BafPKo_0863"/>
<dbReference type="PATRIC" id="fig|390236.22.peg.824"/>
<dbReference type="eggNOG" id="COG0556">
    <property type="taxonomic scope" value="Bacteria"/>
</dbReference>
<dbReference type="HOGENOM" id="CLU_009621_2_1_12"/>
<dbReference type="OrthoDB" id="9806651at2"/>
<dbReference type="Proteomes" id="UP000005216">
    <property type="component" value="Chromosome"/>
</dbReference>
<dbReference type="GO" id="GO:0005737">
    <property type="term" value="C:cytoplasm"/>
    <property type="evidence" value="ECO:0007669"/>
    <property type="project" value="UniProtKB-SubCell"/>
</dbReference>
<dbReference type="GO" id="GO:0009380">
    <property type="term" value="C:excinuclease repair complex"/>
    <property type="evidence" value="ECO:0007669"/>
    <property type="project" value="InterPro"/>
</dbReference>
<dbReference type="GO" id="GO:0005524">
    <property type="term" value="F:ATP binding"/>
    <property type="evidence" value="ECO:0007669"/>
    <property type="project" value="UniProtKB-UniRule"/>
</dbReference>
<dbReference type="GO" id="GO:0016887">
    <property type="term" value="F:ATP hydrolysis activity"/>
    <property type="evidence" value="ECO:0007669"/>
    <property type="project" value="InterPro"/>
</dbReference>
<dbReference type="GO" id="GO:0003677">
    <property type="term" value="F:DNA binding"/>
    <property type="evidence" value="ECO:0007669"/>
    <property type="project" value="UniProtKB-UniRule"/>
</dbReference>
<dbReference type="GO" id="GO:0009381">
    <property type="term" value="F:excinuclease ABC activity"/>
    <property type="evidence" value="ECO:0007669"/>
    <property type="project" value="UniProtKB-UniRule"/>
</dbReference>
<dbReference type="GO" id="GO:0004386">
    <property type="term" value="F:helicase activity"/>
    <property type="evidence" value="ECO:0007669"/>
    <property type="project" value="UniProtKB-KW"/>
</dbReference>
<dbReference type="GO" id="GO:0006289">
    <property type="term" value="P:nucleotide-excision repair"/>
    <property type="evidence" value="ECO:0007669"/>
    <property type="project" value="UniProtKB-UniRule"/>
</dbReference>
<dbReference type="GO" id="GO:0009432">
    <property type="term" value="P:SOS response"/>
    <property type="evidence" value="ECO:0007669"/>
    <property type="project" value="UniProtKB-UniRule"/>
</dbReference>
<dbReference type="CDD" id="cd17916">
    <property type="entry name" value="DEXHc_UvrB"/>
    <property type="match status" value="1"/>
</dbReference>
<dbReference type="CDD" id="cd18790">
    <property type="entry name" value="SF2_C_UvrB"/>
    <property type="match status" value="1"/>
</dbReference>
<dbReference type="Gene3D" id="3.40.50.300">
    <property type="entry name" value="P-loop containing nucleotide triphosphate hydrolases"/>
    <property type="match status" value="3"/>
</dbReference>
<dbReference type="HAMAP" id="MF_00204">
    <property type="entry name" value="UvrB"/>
    <property type="match status" value="1"/>
</dbReference>
<dbReference type="InterPro" id="IPR006935">
    <property type="entry name" value="Helicase/UvrB_N"/>
</dbReference>
<dbReference type="InterPro" id="IPR014001">
    <property type="entry name" value="Helicase_ATP-bd"/>
</dbReference>
<dbReference type="InterPro" id="IPR001650">
    <property type="entry name" value="Helicase_C-like"/>
</dbReference>
<dbReference type="InterPro" id="IPR027417">
    <property type="entry name" value="P-loop_NTPase"/>
</dbReference>
<dbReference type="InterPro" id="IPR001943">
    <property type="entry name" value="UVR_dom"/>
</dbReference>
<dbReference type="InterPro" id="IPR036876">
    <property type="entry name" value="UVR_dom_sf"/>
</dbReference>
<dbReference type="InterPro" id="IPR004807">
    <property type="entry name" value="UvrB"/>
</dbReference>
<dbReference type="InterPro" id="IPR041471">
    <property type="entry name" value="UvrB_inter"/>
</dbReference>
<dbReference type="InterPro" id="IPR024759">
    <property type="entry name" value="UvrB_YAD/RRR_dom"/>
</dbReference>
<dbReference type="NCBIfam" id="NF003673">
    <property type="entry name" value="PRK05298.1"/>
    <property type="match status" value="1"/>
</dbReference>
<dbReference type="NCBIfam" id="TIGR00631">
    <property type="entry name" value="uvrb"/>
    <property type="match status" value="1"/>
</dbReference>
<dbReference type="PANTHER" id="PTHR24029">
    <property type="entry name" value="UVRABC SYSTEM PROTEIN B"/>
    <property type="match status" value="1"/>
</dbReference>
<dbReference type="PANTHER" id="PTHR24029:SF0">
    <property type="entry name" value="UVRABC SYSTEM PROTEIN B"/>
    <property type="match status" value="1"/>
</dbReference>
<dbReference type="Pfam" id="PF00271">
    <property type="entry name" value="Helicase_C"/>
    <property type="match status" value="1"/>
</dbReference>
<dbReference type="Pfam" id="PF04851">
    <property type="entry name" value="ResIII"/>
    <property type="match status" value="1"/>
</dbReference>
<dbReference type="Pfam" id="PF02151">
    <property type="entry name" value="UVR"/>
    <property type="match status" value="1"/>
</dbReference>
<dbReference type="Pfam" id="PF12344">
    <property type="entry name" value="UvrB"/>
    <property type="match status" value="1"/>
</dbReference>
<dbReference type="Pfam" id="PF17757">
    <property type="entry name" value="UvrB_inter"/>
    <property type="match status" value="1"/>
</dbReference>
<dbReference type="SMART" id="SM00487">
    <property type="entry name" value="DEXDc"/>
    <property type="match status" value="1"/>
</dbReference>
<dbReference type="SMART" id="SM00490">
    <property type="entry name" value="HELICc"/>
    <property type="match status" value="1"/>
</dbReference>
<dbReference type="SUPFAM" id="SSF46600">
    <property type="entry name" value="C-terminal UvrC-binding domain of UvrB"/>
    <property type="match status" value="1"/>
</dbReference>
<dbReference type="SUPFAM" id="SSF52540">
    <property type="entry name" value="P-loop containing nucleoside triphosphate hydrolases"/>
    <property type="match status" value="2"/>
</dbReference>
<dbReference type="PROSITE" id="PS51192">
    <property type="entry name" value="HELICASE_ATP_BIND_1"/>
    <property type="match status" value="1"/>
</dbReference>
<dbReference type="PROSITE" id="PS51194">
    <property type="entry name" value="HELICASE_CTER"/>
    <property type="match status" value="1"/>
</dbReference>
<dbReference type="PROSITE" id="PS50151">
    <property type="entry name" value="UVR"/>
    <property type="match status" value="1"/>
</dbReference>
<comment type="function">
    <text evidence="1">The UvrABC repair system catalyzes the recognition and processing of DNA lesions. A damage recognition complex composed of 2 UvrA and 2 UvrB subunits scans DNA for abnormalities. Upon binding of the UvrA(2)B(2) complex to a putative damaged site, the DNA wraps around one UvrB monomer. DNA wrap is dependent on ATP binding by UvrB and probably causes local melting of the DNA helix, facilitating insertion of UvrB beta-hairpin between the DNA strands. Then UvrB probes one DNA strand for the presence of a lesion. If a lesion is found the UvrA subunits dissociate and the UvrB-DNA preincision complex is formed. This complex is subsequently bound by UvrC and the second UvrB is released. If no lesion is found, the DNA wraps around the other UvrB subunit that will check the other stand for damage.</text>
</comment>
<comment type="subunit">
    <text evidence="1">Forms a heterotetramer with UvrA during the search for lesions. Interacts with UvrC in an incision complex.</text>
</comment>
<comment type="subcellular location">
    <subcellularLocation>
        <location evidence="1">Cytoplasm</location>
    </subcellularLocation>
</comment>
<comment type="domain">
    <text evidence="1">The beta-hairpin motif is involved in DNA binding.</text>
</comment>
<comment type="similarity">
    <text evidence="1">Belongs to the UvrB family.</text>
</comment>
<organism>
    <name type="scientific">Borreliella afzelii (strain PKo)</name>
    <name type="common">Borrelia afzelii</name>
    <dbReference type="NCBI Taxonomy" id="390236"/>
    <lineage>
        <taxon>Bacteria</taxon>
        <taxon>Pseudomonadati</taxon>
        <taxon>Spirochaetota</taxon>
        <taxon>Spirochaetia</taxon>
        <taxon>Spirochaetales</taxon>
        <taxon>Borreliaceae</taxon>
        <taxon>Borreliella</taxon>
    </lineage>
</organism>
<name>UVRB_BORAP</name>
<reference key="1">
    <citation type="journal article" date="2006" name="BMC Genomics">
        <title>Comparative genome analysis: selection pressure on the Borrelia vls cassettes is essential for infectivity.</title>
        <authorList>
            <person name="Gloeckner G."/>
            <person name="Schulte-Spechtel U."/>
            <person name="Schilhabel M."/>
            <person name="Felder M."/>
            <person name="Suehnel J."/>
            <person name="Wilske B."/>
            <person name="Platzer M."/>
        </authorList>
    </citation>
    <scope>NUCLEOTIDE SEQUENCE [LARGE SCALE GENOMIC DNA]</scope>
    <source>
        <strain>PKo</strain>
    </source>
</reference>
<reference key="2">
    <citation type="journal article" date="2011" name="J. Bacteriol.">
        <title>Whole-genome sequences of two Borrelia afzelii and two Borrelia garinii Lyme disease agent isolates.</title>
        <authorList>
            <person name="Casjens S.R."/>
            <person name="Mongodin E.F."/>
            <person name="Qiu W.G."/>
            <person name="Dunn J.J."/>
            <person name="Luft B.J."/>
            <person name="Fraser-Liggett C.M."/>
            <person name="Schutzer S.E."/>
        </authorList>
    </citation>
    <scope>NUCLEOTIDE SEQUENCE [LARGE SCALE GENOMIC DNA]</scope>
    <source>
        <strain>PKo</strain>
    </source>
</reference>
<evidence type="ECO:0000255" key="1">
    <source>
        <dbReference type="HAMAP-Rule" id="MF_00204"/>
    </source>
</evidence>
<proteinExistence type="inferred from homology"/>
<feature type="chain" id="PRO_1000077869" description="UvrABC system protein B">
    <location>
        <begin position="1"/>
        <end position="664"/>
    </location>
</feature>
<feature type="domain" description="Helicase ATP-binding" evidence="1">
    <location>
        <begin position="25"/>
        <end position="170"/>
    </location>
</feature>
<feature type="domain" description="Helicase C-terminal" evidence="1">
    <location>
        <begin position="429"/>
        <end position="595"/>
    </location>
</feature>
<feature type="domain" description="UVR" evidence="1">
    <location>
        <begin position="622"/>
        <end position="657"/>
    </location>
</feature>
<feature type="short sequence motif" description="Beta-hairpin">
    <location>
        <begin position="91"/>
        <end position="114"/>
    </location>
</feature>
<feature type="binding site" evidence="1">
    <location>
        <begin position="38"/>
        <end position="45"/>
    </location>
    <ligand>
        <name>ATP</name>
        <dbReference type="ChEBI" id="CHEBI:30616"/>
    </ligand>
</feature>
<keyword id="KW-0067">ATP-binding</keyword>
<keyword id="KW-0963">Cytoplasm</keyword>
<keyword id="KW-0227">DNA damage</keyword>
<keyword id="KW-0228">DNA excision</keyword>
<keyword id="KW-0234">DNA repair</keyword>
<keyword id="KW-0267">Excision nuclease</keyword>
<keyword id="KW-0347">Helicase</keyword>
<keyword id="KW-0378">Hydrolase</keyword>
<keyword id="KW-0547">Nucleotide-binding</keyword>
<keyword id="KW-0742">SOS response</keyword>